<organism>
    <name type="scientific">Azotobacter vinelandii (strain DJ / ATCC BAA-1303)</name>
    <dbReference type="NCBI Taxonomy" id="322710"/>
    <lineage>
        <taxon>Bacteria</taxon>
        <taxon>Pseudomonadati</taxon>
        <taxon>Pseudomonadota</taxon>
        <taxon>Gammaproteobacteria</taxon>
        <taxon>Pseudomonadales</taxon>
        <taxon>Pseudomonadaceae</taxon>
        <taxon>Azotobacter</taxon>
    </lineage>
</organism>
<keyword id="KW-0067">ATP-binding</keyword>
<keyword id="KW-0143">Chaperone</keyword>
<keyword id="KW-0963">Cytoplasm</keyword>
<keyword id="KW-0547">Nucleotide-binding</keyword>
<keyword id="KW-0346">Stress response</keyword>
<reference key="1">
    <citation type="journal article" date="2009" name="J. Bacteriol.">
        <title>Genome sequence of Azotobacter vinelandii, an obligate aerobe specialized to support diverse anaerobic metabolic processes.</title>
        <authorList>
            <person name="Setubal J.C."/>
            <person name="Dos Santos P."/>
            <person name="Goldman B.S."/>
            <person name="Ertesvaag H."/>
            <person name="Espin G."/>
            <person name="Rubio L.M."/>
            <person name="Valla S."/>
            <person name="Almeida N.F."/>
            <person name="Balasubramanian D."/>
            <person name="Cromes L."/>
            <person name="Curatti L."/>
            <person name="Du Z."/>
            <person name="Godsy E."/>
            <person name="Goodner B."/>
            <person name="Hellner-Burris K."/>
            <person name="Hernandez J.A."/>
            <person name="Houmiel K."/>
            <person name="Imperial J."/>
            <person name="Kennedy C."/>
            <person name="Larson T.J."/>
            <person name="Latreille P."/>
            <person name="Ligon L.S."/>
            <person name="Lu J."/>
            <person name="Maerk M."/>
            <person name="Miller N.M."/>
            <person name="Norton S."/>
            <person name="O'Carroll I.P."/>
            <person name="Paulsen I."/>
            <person name="Raulfs E.C."/>
            <person name="Roemer R."/>
            <person name="Rosser J."/>
            <person name="Segura D."/>
            <person name="Slater S."/>
            <person name="Stricklin S.L."/>
            <person name="Studholme D.J."/>
            <person name="Sun J."/>
            <person name="Viana C.J."/>
            <person name="Wallin E."/>
            <person name="Wang B."/>
            <person name="Wheeler C."/>
            <person name="Zhu H."/>
            <person name="Dean D.R."/>
            <person name="Dixon R."/>
            <person name="Wood D."/>
        </authorList>
    </citation>
    <scope>NUCLEOTIDE SEQUENCE [LARGE SCALE GENOMIC DNA]</scope>
    <source>
        <strain>DJ / ATCC BAA-1303</strain>
    </source>
</reference>
<evidence type="ECO:0000255" key="1">
    <source>
        <dbReference type="HAMAP-Rule" id="MF_00249"/>
    </source>
</evidence>
<comment type="function">
    <text evidence="1">ATPase subunit of a proteasome-like degradation complex; this subunit has chaperone activity. The binding of ATP and its subsequent hydrolysis by HslU are essential for unfolding of protein substrates subsequently hydrolyzed by HslV. HslU recognizes the N-terminal part of its protein substrates and unfolds these before they are guided to HslV for hydrolysis.</text>
</comment>
<comment type="subunit">
    <text evidence="1">A double ring-shaped homohexamer of HslV is capped on each side by a ring-shaped HslU homohexamer. The assembly of the HslU/HslV complex is dependent on binding of ATP.</text>
</comment>
<comment type="subcellular location">
    <subcellularLocation>
        <location evidence="1">Cytoplasm</location>
    </subcellularLocation>
</comment>
<comment type="similarity">
    <text evidence="1">Belongs to the ClpX chaperone family. HslU subfamily.</text>
</comment>
<proteinExistence type="inferred from homology"/>
<name>HSLU_AZOVD</name>
<gene>
    <name evidence="1" type="primary">hslU</name>
    <name type="ordered locus">Avin_45390</name>
</gene>
<protein>
    <recommendedName>
        <fullName evidence="1">ATP-dependent protease ATPase subunit HslU</fullName>
    </recommendedName>
    <alternativeName>
        <fullName evidence="1">Unfoldase HslU</fullName>
    </alternativeName>
</protein>
<accession>C1DHS0</accession>
<dbReference type="EMBL" id="CP001157">
    <property type="protein sequence ID" value="ACO80653.1"/>
    <property type="molecule type" value="Genomic_DNA"/>
</dbReference>
<dbReference type="RefSeq" id="WP_012703020.1">
    <property type="nucleotide sequence ID" value="NC_012560.1"/>
</dbReference>
<dbReference type="SMR" id="C1DHS0"/>
<dbReference type="STRING" id="322710.Avin_45390"/>
<dbReference type="EnsemblBacteria" id="ACO80653">
    <property type="protein sequence ID" value="ACO80653"/>
    <property type="gene ID" value="Avin_45390"/>
</dbReference>
<dbReference type="GeneID" id="88187423"/>
<dbReference type="KEGG" id="avn:Avin_45390"/>
<dbReference type="eggNOG" id="COG1220">
    <property type="taxonomic scope" value="Bacteria"/>
</dbReference>
<dbReference type="HOGENOM" id="CLU_033123_0_0_6"/>
<dbReference type="OrthoDB" id="9804062at2"/>
<dbReference type="Proteomes" id="UP000002424">
    <property type="component" value="Chromosome"/>
</dbReference>
<dbReference type="GO" id="GO:0009376">
    <property type="term" value="C:HslUV protease complex"/>
    <property type="evidence" value="ECO:0007669"/>
    <property type="project" value="UniProtKB-UniRule"/>
</dbReference>
<dbReference type="GO" id="GO:0005524">
    <property type="term" value="F:ATP binding"/>
    <property type="evidence" value="ECO:0007669"/>
    <property type="project" value="UniProtKB-UniRule"/>
</dbReference>
<dbReference type="GO" id="GO:0016887">
    <property type="term" value="F:ATP hydrolysis activity"/>
    <property type="evidence" value="ECO:0007669"/>
    <property type="project" value="InterPro"/>
</dbReference>
<dbReference type="GO" id="GO:0008233">
    <property type="term" value="F:peptidase activity"/>
    <property type="evidence" value="ECO:0007669"/>
    <property type="project" value="InterPro"/>
</dbReference>
<dbReference type="GO" id="GO:0036402">
    <property type="term" value="F:proteasome-activating activity"/>
    <property type="evidence" value="ECO:0007669"/>
    <property type="project" value="UniProtKB-UniRule"/>
</dbReference>
<dbReference type="GO" id="GO:0043335">
    <property type="term" value="P:protein unfolding"/>
    <property type="evidence" value="ECO:0007669"/>
    <property type="project" value="UniProtKB-UniRule"/>
</dbReference>
<dbReference type="GO" id="GO:0051603">
    <property type="term" value="P:proteolysis involved in protein catabolic process"/>
    <property type="evidence" value="ECO:0007669"/>
    <property type="project" value="TreeGrafter"/>
</dbReference>
<dbReference type="CDD" id="cd19498">
    <property type="entry name" value="RecA-like_HslU"/>
    <property type="match status" value="1"/>
</dbReference>
<dbReference type="FunFam" id="1.10.8.10:FF:000028">
    <property type="entry name" value="ATP-dependent protease ATPase subunit HslU"/>
    <property type="match status" value="1"/>
</dbReference>
<dbReference type="FunFam" id="3.40.50.300:FF:000213">
    <property type="entry name" value="ATP-dependent protease ATPase subunit HslU"/>
    <property type="match status" value="1"/>
</dbReference>
<dbReference type="FunFam" id="3.40.50.300:FF:000220">
    <property type="entry name" value="ATP-dependent protease ATPase subunit HslU"/>
    <property type="match status" value="1"/>
</dbReference>
<dbReference type="Gene3D" id="1.10.8.60">
    <property type="match status" value="1"/>
</dbReference>
<dbReference type="Gene3D" id="1.10.8.10">
    <property type="entry name" value="DNA helicase RuvA subunit, C-terminal domain"/>
    <property type="match status" value="1"/>
</dbReference>
<dbReference type="Gene3D" id="3.40.50.300">
    <property type="entry name" value="P-loop containing nucleotide triphosphate hydrolases"/>
    <property type="match status" value="2"/>
</dbReference>
<dbReference type="HAMAP" id="MF_00249">
    <property type="entry name" value="HslU"/>
    <property type="match status" value="1"/>
</dbReference>
<dbReference type="InterPro" id="IPR003593">
    <property type="entry name" value="AAA+_ATPase"/>
</dbReference>
<dbReference type="InterPro" id="IPR050052">
    <property type="entry name" value="ATP-dep_Clp_protease_ClpX"/>
</dbReference>
<dbReference type="InterPro" id="IPR003959">
    <property type="entry name" value="ATPase_AAA_core"/>
</dbReference>
<dbReference type="InterPro" id="IPR019489">
    <property type="entry name" value="Clp_ATPase_C"/>
</dbReference>
<dbReference type="InterPro" id="IPR004491">
    <property type="entry name" value="HslU"/>
</dbReference>
<dbReference type="InterPro" id="IPR027417">
    <property type="entry name" value="P-loop_NTPase"/>
</dbReference>
<dbReference type="NCBIfam" id="TIGR00390">
    <property type="entry name" value="hslU"/>
    <property type="match status" value="1"/>
</dbReference>
<dbReference type="NCBIfam" id="NF003544">
    <property type="entry name" value="PRK05201.1"/>
    <property type="match status" value="1"/>
</dbReference>
<dbReference type="PANTHER" id="PTHR48102">
    <property type="entry name" value="ATP-DEPENDENT CLP PROTEASE ATP-BINDING SUBUNIT CLPX-LIKE, MITOCHONDRIAL-RELATED"/>
    <property type="match status" value="1"/>
</dbReference>
<dbReference type="PANTHER" id="PTHR48102:SF3">
    <property type="entry name" value="ATP-DEPENDENT PROTEASE ATPASE SUBUNIT HSLU"/>
    <property type="match status" value="1"/>
</dbReference>
<dbReference type="Pfam" id="PF00004">
    <property type="entry name" value="AAA"/>
    <property type="match status" value="1"/>
</dbReference>
<dbReference type="Pfam" id="PF07724">
    <property type="entry name" value="AAA_2"/>
    <property type="match status" value="1"/>
</dbReference>
<dbReference type="SMART" id="SM00382">
    <property type="entry name" value="AAA"/>
    <property type="match status" value="1"/>
</dbReference>
<dbReference type="SMART" id="SM01086">
    <property type="entry name" value="ClpB_D2-small"/>
    <property type="match status" value="1"/>
</dbReference>
<dbReference type="SUPFAM" id="SSF52540">
    <property type="entry name" value="P-loop containing nucleoside triphosphate hydrolases"/>
    <property type="match status" value="1"/>
</dbReference>
<feature type="chain" id="PRO_1000204518" description="ATP-dependent protease ATPase subunit HslU">
    <location>
        <begin position="1"/>
        <end position="446"/>
    </location>
</feature>
<feature type="binding site" evidence="1">
    <location>
        <position position="17"/>
    </location>
    <ligand>
        <name>ATP</name>
        <dbReference type="ChEBI" id="CHEBI:30616"/>
    </ligand>
</feature>
<feature type="binding site" evidence="1">
    <location>
        <begin position="59"/>
        <end position="64"/>
    </location>
    <ligand>
        <name>ATP</name>
        <dbReference type="ChEBI" id="CHEBI:30616"/>
    </ligand>
</feature>
<feature type="binding site" evidence="1">
    <location>
        <position position="255"/>
    </location>
    <ligand>
        <name>ATP</name>
        <dbReference type="ChEBI" id="CHEBI:30616"/>
    </ligand>
</feature>
<feature type="binding site" evidence="1">
    <location>
        <position position="320"/>
    </location>
    <ligand>
        <name>ATP</name>
        <dbReference type="ChEBI" id="CHEBI:30616"/>
    </ligand>
</feature>
<feature type="binding site" evidence="1">
    <location>
        <position position="392"/>
    </location>
    <ligand>
        <name>ATP</name>
        <dbReference type="ChEBI" id="CHEBI:30616"/>
    </ligand>
</feature>
<sequence length="446" mass="50056">MSMTPREIVHELNRHIVGQEDAKRAVAIALRNRWRRMQLPAELRAEVTPKNILMIGPTGVGKTEIARRLARLANAPFIKVEATKFTEVGYVGRDVESIIRDLADAAVKMMREQEIQRVRHRAEDAAEDRILDALLPPARQGFGDEPIAREDSNTRQLFRKRLREGQLDDKEIDIEITETPSGVEIMAPPGMEEMTSQLQNLFSSMGKGRKKTHKLKVKDALKLVRDEEAARLVNEEELKARALESVEQNGIVFIDEIDKVAKRANVGGADVSREGVQRDLLPLIEGCTVNTKLGMVKTDHILFIASGAFHLAKPSDLVPELQGRLPIRVELKALTPEDFERILTEPHASLTEQYRELLKTEGLNIQFAADGIKRIAEIAWQVNEKTENIGARRLHTLLERLLEEVSFSAGDLAADHSGQPIVIDAAYVNNHLGELAQDEDLSRYIL</sequence>